<sequence length="481" mass="52270">MSKVLTSLPTGERVGIAFSGGLDTSVAVAWMRDKGAVPCTYTADIGQYDEPDIASVPDRAKTYGAEVARLVDCRAALVEEGLAALTCGAFHIRSGGRAYFNTTPLGRAVTGTLLVRAMLEDDVQIWGDGSTFKGNDIERFYRYGLLANPQLRIYKPWLDADFVTELGGRKEMSEWLVAHDLPYRDSTEKAYSTDANIWGATHEAKTLEHLDTGVETVEPIMGVRFWDPSVEIAPEDVTIGFDQGRPVTINGKEFASAVDLVMEANAVGGRHGMGMSDQIENRIIEAKSRGIYEAPGMALLHAAYERLVNAIHNEDTLAQYHTEGRRLGRLMYEGRWLDPQSLMIRESLQRWVGSAVTGEVTLRLRRGEDYSILDTTGPAFSYHPDKLSMERTEDSAFGPVDRIGQLTMRNLDIADSRAKLEQYAGLGLIGTANPAIGAAQAAATGLIGAMPEGGAQAIASRGEVSADDELLDRAAMESGTD</sequence>
<evidence type="ECO:0000250" key="1"/>
<evidence type="ECO:0000305" key="2"/>
<feature type="initiator methionine" description="Removed" evidence="1">
    <location>
        <position position="1"/>
    </location>
</feature>
<feature type="chain" id="PRO_0000148708" description="Argininosuccinate synthase">
    <location>
        <begin position="2"/>
        <end position="481"/>
    </location>
</feature>
<feature type="binding site" evidence="1">
    <location>
        <begin position="17"/>
        <end position="25"/>
    </location>
    <ligand>
        <name>ATP</name>
        <dbReference type="ChEBI" id="CHEBI:30616"/>
    </ligand>
</feature>
<feature type="binding site" evidence="1">
    <location>
        <position position="43"/>
    </location>
    <ligand>
        <name>ATP</name>
        <dbReference type="ChEBI" id="CHEBI:30616"/>
    </ligand>
</feature>
<feature type="binding site" evidence="1">
    <location>
        <position position="99"/>
    </location>
    <ligand>
        <name>L-citrulline</name>
        <dbReference type="ChEBI" id="CHEBI:57743"/>
    </ligand>
</feature>
<feature type="binding site" evidence="1">
    <location>
        <position position="129"/>
    </location>
    <ligand>
        <name>ATP</name>
        <dbReference type="ChEBI" id="CHEBI:30616"/>
    </ligand>
</feature>
<feature type="binding site" evidence="1">
    <location>
        <position position="131"/>
    </location>
    <ligand>
        <name>ATP</name>
        <dbReference type="ChEBI" id="CHEBI:30616"/>
    </ligand>
</feature>
<feature type="binding site" evidence="1">
    <location>
        <position position="131"/>
    </location>
    <ligand>
        <name>L-aspartate</name>
        <dbReference type="ChEBI" id="CHEBI:29991"/>
    </ligand>
</feature>
<feature type="binding site" evidence="1">
    <location>
        <position position="135"/>
    </location>
    <ligand>
        <name>L-aspartate</name>
        <dbReference type="ChEBI" id="CHEBI:29991"/>
    </ligand>
</feature>
<feature type="binding site" evidence="1">
    <location>
        <position position="135"/>
    </location>
    <ligand>
        <name>L-citrulline</name>
        <dbReference type="ChEBI" id="CHEBI:57743"/>
    </ligand>
</feature>
<feature type="binding site" evidence="1">
    <location>
        <position position="136"/>
    </location>
    <ligand>
        <name>ATP</name>
        <dbReference type="ChEBI" id="CHEBI:30616"/>
    </ligand>
</feature>
<feature type="binding site" evidence="1">
    <location>
        <position position="136"/>
    </location>
    <ligand>
        <name>L-aspartate</name>
        <dbReference type="ChEBI" id="CHEBI:29991"/>
    </ligand>
</feature>
<feature type="binding site" evidence="1">
    <location>
        <position position="139"/>
    </location>
    <ligand>
        <name>L-citrulline</name>
        <dbReference type="ChEBI" id="CHEBI:57743"/>
    </ligand>
</feature>
<feature type="binding site" evidence="1">
    <location>
        <position position="192"/>
    </location>
    <ligand>
        <name>L-citrulline</name>
        <dbReference type="ChEBI" id="CHEBI:57743"/>
    </ligand>
</feature>
<feature type="binding site" evidence="1">
    <location>
        <position position="194"/>
    </location>
    <ligand>
        <name>ATP</name>
        <dbReference type="ChEBI" id="CHEBI:30616"/>
    </ligand>
</feature>
<feature type="binding site" evidence="1">
    <location>
        <position position="201"/>
    </location>
    <ligand>
        <name>L-citrulline</name>
        <dbReference type="ChEBI" id="CHEBI:57743"/>
    </ligand>
</feature>
<feature type="binding site" evidence="1">
    <location>
        <position position="203"/>
    </location>
    <ligand>
        <name>L-citrulline</name>
        <dbReference type="ChEBI" id="CHEBI:57743"/>
    </ligand>
</feature>
<feature type="binding site" evidence="1">
    <location>
        <position position="280"/>
    </location>
    <ligand>
        <name>L-citrulline</name>
        <dbReference type="ChEBI" id="CHEBI:57743"/>
    </ligand>
</feature>
<feature type="sequence conflict" description="In Ref. 1; BAA00691." evidence="2" ref="1">
    <original>AALVEEGLA</original>
    <variation>RRWSRRGWG</variation>
    <location>
        <begin position="75"/>
        <end position="83"/>
    </location>
</feature>
<feature type="sequence conflict" description="In Ref. 1; BAA00691." evidence="2" ref="1">
    <original>L</original>
    <variation>F</variation>
    <location>
        <position position="181"/>
    </location>
</feature>
<feature type="sequence conflict" description="In Ref. 1; BAA00691." evidence="2" ref="1">
    <original>NAVGGRHG</original>
    <variation>TPSAAGTA</variation>
    <location>
        <begin position="265"/>
        <end position="272"/>
    </location>
</feature>
<feature type="sequence conflict" description="In Ref. 1; BAA00691." evidence="2" ref="1">
    <original>R</original>
    <variation>P</variation>
    <location>
        <position position="326"/>
    </location>
</feature>
<feature type="sequence conflict" description="In Ref. 1; BAA00691." evidence="2" ref="1">
    <original>LGL</original>
    <variation>SRF</variation>
    <location>
        <begin position="426"/>
        <end position="428"/>
    </location>
</feature>
<feature type="sequence conflict" description="In Ref. 1; BAA00691." evidence="2" ref="1">
    <original>A</original>
    <variation>P</variation>
    <location>
        <position position="435"/>
    </location>
</feature>
<gene>
    <name type="primary">argG</name>
    <name type="ordered locus">SCO7036</name>
    <name type="ORF">SC4G1.02</name>
</gene>
<name>ASSY_STRCO</name>
<proteinExistence type="inferred from homology"/>
<organism>
    <name type="scientific">Streptomyces coelicolor (strain ATCC BAA-471 / A3(2) / M145)</name>
    <dbReference type="NCBI Taxonomy" id="100226"/>
    <lineage>
        <taxon>Bacteria</taxon>
        <taxon>Bacillati</taxon>
        <taxon>Actinomycetota</taxon>
        <taxon>Actinomycetes</taxon>
        <taxon>Kitasatosporales</taxon>
        <taxon>Streptomycetaceae</taxon>
        <taxon>Streptomyces</taxon>
        <taxon>Streptomyces albidoflavus group</taxon>
    </lineage>
</organism>
<dbReference type="EC" id="6.3.4.5"/>
<dbReference type="EMBL" id="D00799">
    <property type="protein sequence ID" value="BAA00691.1"/>
    <property type="status" value="ALT_INIT"/>
    <property type="molecule type" value="Genomic_DNA"/>
</dbReference>
<dbReference type="EMBL" id="AL939130">
    <property type="protein sequence ID" value="CAC01534.1"/>
    <property type="molecule type" value="Genomic_DNA"/>
</dbReference>
<dbReference type="PIR" id="JQ1057">
    <property type="entry name" value="AJSMRC"/>
</dbReference>
<dbReference type="RefSeq" id="NP_631098.1">
    <property type="nucleotide sequence ID" value="NC_003888.3"/>
</dbReference>
<dbReference type="RefSeq" id="WP_003972108.1">
    <property type="nucleotide sequence ID" value="NZ_VNID01000012.1"/>
</dbReference>
<dbReference type="SMR" id="P24532"/>
<dbReference type="FunCoup" id="P24532">
    <property type="interactions" value="397"/>
</dbReference>
<dbReference type="STRING" id="100226.gene:17764696"/>
<dbReference type="PaxDb" id="100226-SCO7036"/>
<dbReference type="GeneID" id="96653989"/>
<dbReference type="KEGG" id="sco:SCO7036"/>
<dbReference type="PATRIC" id="fig|100226.15.peg.7140"/>
<dbReference type="eggNOG" id="COG0137">
    <property type="taxonomic scope" value="Bacteria"/>
</dbReference>
<dbReference type="HOGENOM" id="CLU_032784_4_1_11"/>
<dbReference type="InParanoid" id="P24532"/>
<dbReference type="OrthoDB" id="9801641at2"/>
<dbReference type="PhylomeDB" id="P24532"/>
<dbReference type="UniPathway" id="UPA00068">
    <property type="reaction ID" value="UER00113"/>
</dbReference>
<dbReference type="Proteomes" id="UP000001973">
    <property type="component" value="Chromosome"/>
</dbReference>
<dbReference type="GO" id="GO:0005737">
    <property type="term" value="C:cytoplasm"/>
    <property type="evidence" value="ECO:0000318"/>
    <property type="project" value="GO_Central"/>
</dbReference>
<dbReference type="GO" id="GO:0004055">
    <property type="term" value="F:argininosuccinate synthase activity"/>
    <property type="evidence" value="ECO:0000318"/>
    <property type="project" value="GO_Central"/>
</dbReference>
<dbReference type="GO" id="GO:0005524">
    <property type="term" value="F:ATP binding"/>
    <property type="evidence" value="ECO:0007669"/>
    <property type="project" value="UniProtKB-UniRule"/>
</dbReference>
<dbReference type="GO" id="GO:0042803">
    <property type="term" value="F:protein homodimerization activity"/>
    <property type="evidence" value="ECO:0007669"/>
    <property type="project" value="InterPro"/>
</dbReference>
<dbReference type="GO" id="GO:0000053">
    <property type="term" value="P:argininosuccinate metabolic process"/>
    <property type="evidence" value="ECO:0000318"/>
    <property type="project" value="GO_Central"/>
</dbReference>
<dbReference type="GO" id="GO:0006526">
    <property type="term" value="P:L-arginine biosynthetic process"/>
    <property type="evidence" value="ECO:0000318"/>
    <property type="project" value="GO_Central"/>
</dbReference>
<dbReference type="GO" id="GO:0000050">
    <property type="term" value="P:urea cycle"/>
    <property type="evidence" value="ECO:0000318"/>
    <property type="project" value="GO_Central"/>
</dbReference>
<dbReference type="CDD" id="cd01999">
    <property type="entry name" value="ASS"/>
    <property type="match status" value="1"/>
</dbReference>
<dbReference type="Gene3D" id="1.10.287.400">
    <property type="match status" value="1"/>
</dbReference>
<dbReference type="Gene3D" id="3.90.1260.10">
    <property type="entry name" value="Argininosuccinate synthetase, chain A, domain 2"/>
    <property type="match status" value="1"/>
</dbReference>
<dbReference type="Gene3D" id="3.40.50.620">
    <property type="entry name" value="HUPs"/>
    <property type="match status" value="1"/>
</dbReference>
<dbReference type="HAMAP" id="MF_00581">
    <property type="entry name" value="Arg_succ_synth_type2"/>
    <property type="match status" value="1"/>
</dbReference>
<dbReference type="InterPro" id="IPR023437">
    <property type="entry name" value="Arg_succ_synth_type2_subfam"/>
</dbReference>
<dbReference type="InterPro" id="IPR048268">
    <property type="entry name" value="Arginosuc_syn_C"/>
</dbReference>
<dbReference type="InterPro" id="IPR048267">
    <property type="entry name" value="Arginosuc_syn_N"/>
</dbReference>
<dbReference type="InterPro" id="IPR001518">
    <property type="entry name" value="Arginosuc_synth"/>
</dbReference>
<dbReference type="InterPro" id="IPR018223">
    <property type="entry name" value="Arginosuc_synth_CS"/>
</dbReference>
<dbReference type="InterPro" id="IPR023434">
    <property type="entry name" value="Arginosuc_synth_type_1_subfam"/>
</dbReference>
<dbReference type="InterPro" id="IPR024074">
    <property type="entry name" value="AS_cat/multimer_dom_body"/>
</dbReference>
<dbReference type="InterPro" id="IPR024073">
    <property type="entry name" value="AS_multimer_C_tail"/>
</dbReference>
<dbReference type="InterPro" id="IPR014729">
    <property type="entry name" value="Rossmann-like_a/b/a_fold"/>
</dbReference>
<dbReference type="NCBIfam" id="TIGR00032">
    <property type="entry name" value="argG"/>
    <property type="match status" value="1"/>
</dbReference>
<dbReference type="NCBIfam" id="NF003779">
    <property type="entry name" value="PRK05370.1"/>
    <property type="match status" value="1"/>
</dbReference>
<dbReference type="PANTHER" id="PTHR11587">
    <property type="entry name" value="ARGININOSUCCINATE SYNTHASE"/>
    <property type="match status" value="1"/>
</dbReference>
<dbReference type="PANTHER" id="PTHR11587:SF2">
    <property type="entry name" value="ARGININOSUCCINATE SYNTHASE"/>
    <property type="match status" value="1"/>
</dbReference>
<dbReference type="Pfam" id="PF20979">
    <property type="entry name" value="Arginosuc_syn_C"/>
    <property type="match status" value="1"/>
</dbReference>
<dbReference type="Pfam" id="PF00764">
    <property type="entry name" value="Arginosuc_synth"/>
    <property type="match status" value="1"/>
</dbReference>
<dbReference type="SUPFAM" id="SSF52402">
    <property type="entry name" value="Adenine nucleotide alpha hydrolases-like"/>
    <property type="match status" value="1"/>
</dbReference>
<dbReference type="SUPFAM" id="SSF69864">
    <property type="entry name" value="Argininosuccinate synthetase, C-terminal domain"/>
    <property type="match status" value="1"/>
</dbReference>
<dbReference type="PROSITE" id="PS00564">
    <property type="entry name" value="ARGININOSUCCIN_SYN_1"/>
    <property type="match status" value="1"/>
</dbReference>
<dbReference type="PROSITE" id="PS00565">
    <property type="entry name" value="ARGININOSUCCIN_SYN_2"/>
    <property type="match status" value="1"/>
</dbReference>
<reference key="1">
    <citation type="journal article" date="1991" name="Nihon Hosenkin Gakkaishi">
        <title>Nucleotide sequence of the gene encoding argininosuccinate synthetase in Streptomyces coelicolor A3(2).</title>
        <authorList>
            <person name="Ishihara H."/>
            <person name="Urabe H."/>
            <person name="Kasama H."/>
            <person name="Ogawara H."/>
        </authorList>
    </citation>
    <scope>NUCLEOTIDE SEQUENCE [GENOMIC DNA]</scope>
    <source>
        <strain>A3(2) / NRRL B-16638</strain>
    </source>
</reference>
<reference key="2">
    <citation type="journal article" date="2002" name="Nature">
        <title>Complete genome sequence of the model actinomycete Streptomyces coelicolor A3(2).</title>
        <authorList>
            <person name="Bentley S.D."/>
            <person name="Chater K.F."/>
            <person name="Cerdeno-Tarraga A.-M."/>
            <person name="Challis G.L."/>
            <person name="Thomson N.R."/>
            <person name="James K.D."/>
            <person name="Harris D.E."/>
            <person name="Quail M.A."/>
            <person name="Kieser H."/>
            <person name="Harper D."/>
            <person name="Bateman A."/>
            <person name="Brown S."/>
            <person name="Chandra G."/>
            <person name="Chen C.W."/>
            <person name="Collins M."/>
            <person name="Cronin A."/>
            <person name="Fraser A."/>
            <person name="Goble A."/>
            <person name="Hidalgo J."/>
            <person name="Hornsby T."/>
            <person name="Howarth S."/>
            <person name="Huang C.-H."/>
            <person name="Kieser T."/>
            <person name="Larke L."/>
            <person name="Murphy L.D."/>
            <person name="Oliver K."/>
            <person name="O'Neil S."/>
            <person name="Rabbinowitsch E."/>
            <person name="Rajandream M.A."/>
            <person name="Rutherford K.M."/>
            <person name="Rutter S."/>
            <person name="Seeger K."/>
            <person name="Saunders D."/>
            <person name="Sharp S."/>
            <person name="Squares R."/>
            <person name="Squares S."/>
            <person name="Taylor K."/>
            <person name="Warren T."/>
            <person name="Wietzorrek A."/>
            <person name="Woodward J.R."/>
            <person name="Barrell B.G."/>
            <person name="Parkhill J."/>
            <person name="Hopwood D.A."/>
        </authorList>
    </citation>
    <scope>NUCLEOTIDE SEQUENCE [LARGE SCALE GENOMIC DNA]</scope>
    <source>
        <strain>ATCC BAA-471 / A3(2) / M145</strain>
    </source>
</reference>
<comment type="catalytic activity">
    <reaction>
        <text>L-citrulline + L-aspartate + ATP = 2-(N(omega)-L-arginino)succinate + AMP + diphosphate + H(+)</text>
        <dbReference type="Rhea" id="RHEA:10932"/>
        <dbReference type="ChEBI" id="CHEBI:15378"/>
        <dbReference type="ChEBI" id="CHEBI:29991"/>
        <dbReference type="ChEBI" id="CHEBI:30616"/>
        <dbReference type="ChEBI" id="CHEBI:33019"/>
        <dbReference type="ChEBI" id="CHEBI:57472"/>
        <dbReference type="ChEBI" id="CHEBI:57743"/>
        <dbReference type="ChEBI" id="CHEBI:456215"/>
        <dbReference type="EC" id="6.3.4.5"/>
    </reaction>
</comment>
<comment type="pathway">
    <text>Amino-acid biosynthesis; L-arginine biosynthesis; L-arginine from L-ornithine and carbamoyl phosphate: step 2/3.</text>
</comment>
<comment type="subunit">
    <text evidence="1">Homotetramer.</text>
</comment>
<comment type="subcellular location">
    <subcellularLocation>
        <location evidence="1">Cytoplasm</location>
    </subcellularLocation>
</comment>
<comment type="similarity">
    <text evidence="2">Belongs to the argininosuccinate synthase family. Type 2 subfamily.</text>
</comment>
<comment type="sequence caution" evidence="2">
    <conflict type="erroneous initiation">
        <sequence resource="EMBL-CDS" id="BAA00691"/>
    </conflict>
</comment>
<protein>
    <recommendedName>
        <fullName>Argininosuccinate synthase</fullName>
        <ecNumber>6.3.4.5</ecNumber>
    </recommendedName>
    <alternativeName>
        <fullName>Citrulline--aspartate ligase</fullName>
    </alternativeName>
</protein>
<accession>P24532</accession>
<accession>Q9FC47</accession>
<keyword id="KW-0028">Amino-acid biosynthesis</keyword>
<keyword id="KW-0055">Arginine biosynthesis</keyword>
<keyword id="KW-0067">ATP-binding</keyword>
<keyword id="KW-0963">Cytoplasm</keyword>
<keyword id="KW-0436">Ligase</keyword>
<keyword id="KW-0547">Nucleotide-binding</keyword>
<keyword id="KW-1185">Reference proteome</keyword>